<keyword id="KW-0040">ANK repeat</keyword>
<keyword id="KW-1267">Proteomics identification</keyword>
<keyword id="KW-1185">Reference proteome</keyword>
<keyword id="KW-0677">Repeat</keyword>
<reference key="1">
    <citation type="journal article" date="2004" name="Nat. Genet.">
        <title>Complete sequencing and characterization of 21,243 full-length human cDNAs.</title>
        <authorList>
            <person name="Ota T."/>
            <person name="Suzuki Y."/>
            <person name="Nishikawa T."/>
            <person name="Otsuki T."/>
            <person name="Sugiyama T."/>
            <person name="Irie R."/>
            <person name="Wakamatsu A."/>
            <person name="Hayashi K."/>
            <person name="Sato H."/>
            <person name="Nagai K."/>
            <person name="Kimura K."/>
            <person name="Makita H."/>
            <person name="Sekine M."/>
            <person name="Obayashi M."/>
            <person name="Nishi T."/>
            <person name="Shibahara T."/>
            <person name="Tanaka T."/>
            <person name="Ishii S."/>
            <person name="Yamamoto J."/>
            <person name="Saito K."/>
            <person name="Kawai Y."/>
            <person name="Isono Y."/>
            <person name="Nakamura Y."/>
            <person name="Nagahari K."/>
            <person name="Murakami K."/>
            <person name="Yasuda T."/>
            <person name="Iwayanagi T."/>
            <person name="Wagatsuma M."/>
            <person name="Shiratori A."/>
            <person name="Sudo H."/>
            <person name="Hosoiri T."/>
            <person name="Kaku Y."/>
            <person name="Kodaira H."/>
            <person name="Kondo H."/>
            <person name="Sugawara M."/>
            <person name="Takahashi M."/>
            <person name="Kanda K."/>
            <person name="Yokoi T."/>
            <person name="Furuya T."/>
            <person name="Kikkawa E."/>
            <person name="Omura Y."/>
            <person name="Abe K."/>
            <person name="Kamihara K."/>
            <person name="Katsuta N."/>
            <person name="Sato K."/>
            <person name="Tanikawa M."/>
            <person name="Yamazaki M."/>
            <person name="Ninomiya K."/>
            <person name="Ishibashi T."/>
            <person name="Yamashita H."/>
            <person name="Murakawa K."/>
            <person name="Fujimori K."/>
            <person name="Tanai H."/>
            <person name="Kimata M."/>
            <person name="Watanabe M."/>
            <person name="Hiraoka S."/>
            <person name="Chiba Y."/>
            <person name="Ishida S."/>
            <person name="Ono Y."/>
            <person name="Takiguchi S."/>
            <person name="Watanabe S."/>
            <person name="Yosida M."/>
            <person name="Hotuta T."/>
            <person name="Kusano J."/>
            <person name="Kanehori K."/>
            <person name="Takahashi-Fujii A."/>
            <person name="Hara H."/>
            <person name="Tanase T.-O."/>
            <person name="Nomura Y."/>
            <person name="Togiya S."/>
            <person name="Komai F."/>
            <person name="Hara R."/>
            <person name="Takeuchi K."/>
            <person name="Arita M."/>
            <person name="Imose N."/>
            <person name="Musashino K."/>
            <person name="Yuuki H."/>
            <person name="Oshima A."/>
            <person name="Sasaki N."/>
            <person name="Aotsuka S."/>
            <person name="Yoshikawa Y."/>
            <person name="Matsunawa H."/>
            <person name="Ichihara T."/>
            <person name="Shiohata N."/>
            <person name="Sano S."/>
            <person name="Moriya S."/>
            <person name="Momiyama H."/>
            <person name="Satoh N."/>
            <person name="Takami S."/>
            <person name="Terashima Y."/>
            <person name="Suzuki O."/>
            <person name="Nakagawa S."/>
            <person name="Senoh A."/>
            <person name="Mizoguchi H."/>
            <person name="Goto Y."/>
            <person name="Shimizu F."/>
            <person name="Wakebe H."/>
            <person name="Hishigaki H."/>
            <person name="Watanabe T."/>
            <person name="Sugiyama A."/>
            <person name="Takemoto M."/>
            <person name="Kawakami B."/>
            <person name="Yamazaki M."/>
            <person name="Watanabe K."/>
            <person name="Kumagai A."/>
            <person name="Itakura S."/>
            <person name="Fukuzumi Y."/>
            <person name="Fujimori Y."/>
            <person name="Komiyama M."/>
            <person name="Tashiro H."/>
            <person name="Tanigami A."/>
            <person name="Fujiwara T."/>
            <person name="Ono T."/>
            <person name="Yamada K."/>
            <person name="Fujii Y."/>
            <person name="Ozaki K."/>
            <person name="Hirao M."/>
            <person name="Ohmori Y."/>
            <person name="Kawabata A."/>
            <person name="Hikiji T."/>
            <person name="Kobatake N."/>
            <person name="Inagaki H."/>
            <person name="Ikema Y."/>
            <person name="Okamoto S."/>
            <person name="Okitani R."/>
            <person name="Kawakami T."/>
            <person name="Noguchi S."/>
            <person name="Itoh T."/>
            <person name="Shigeta K."/>
            <person name="Senba T."/>
            <person name="Matsumura K."/>
            <person name="Nakajima Y."/>
            <person name="Mizuno T."/>
            <person name="Morinaga M."/>
            <person name="Sasaki M."/>
            <person name="Togashi T."/>
            <person name="Oyama M."/>
            <person name="Hata H."/>
            <person name="Watanabe M."/>
            <person name="Komatsu T."/>
            <person name="Mizushima-Sugano J."/>
            <person name="Satoh T."/>
            <person name="Shirai Y."/>
            <person name="Takahashi Y."/>
            <person name="Nakagawa K."/>
            <person name="Okumura K."/>
            <person name="Nagase T."/>
            <person name="Nomura N."/>
            <person name="Kikuchi H."/>
            <person name="Masuho Y."/>
            <person name="Yamashita R."/>
            <person name="Nakai K."/>
            <person name="Yada T."/>
            <person name="Nakamura Y."/>
            <person name="Ohara O."/>
            <person name="Isogai T."/>
            <person name="Sugano S."/>
        </authorList>
    </citation>
    <scope>NUCLEOTIDE SEQUENCE [LARGE SCALE MRNA]</scope>
    <source>
        <tissue>Liver</tissue>
    </source>
</reference>
<reference key="2">
    <citation type="journal article" date="2004" name="Nature">
        <title>The DNA sequence and comparative analysis of human chromosome 10.</title>
        <authorList>
            <person name="Deloukas P."/>
            <person name="Earthrowl M.E."/>
            <person name="Grafham D.V."/>
            <person name="Rubenfield M."/>
            <person name="French L."/>
            <person name="Steward C.A."/>
            <person name="Sims S.K."/>
            <person name="Jones M.C."/>
            <person name="Searle S."/>
            <person name="Scott C."/>
            <person name="Howe K."/>
            <person name="Hunt S.E."/>
            <person name="Andrews T.D."/>
            <person name="Gilbert J.G.R."/>
            <person name="Swarbreck D."/>
            <person name="Ashurst J.L."/>
            <person name="Taylor A."/>
            <person name="Battles J."/>
            <person name="Bird C.P."/>
            <person name="Ainscough R."/>
            <person name="Almeida J.P."/>
            <person name="Ashwell R.I.S."/>
            <person name="Ambrose K.D."/>
            <person name="Babbage A.K."/>
            <person name="Bagguley C.L."/>
            <person name="Bailey J."/>
            <person name="Banerjee R."/>
            <person name="Bates K."/>
            <person name="Beasley H."/>
            <person name="Bray-Allen S."/>
            <person name="Brown A.J."/>
            <person name="Brown J.Y."/>
            <person name="Burford D.C."/>
            <person name="Burrill W."/>
            <person name="Burton J."/>
            <person name="Cahill P."/>
            <person name="Camire D."/>
            <person name="Carter N.P."/>
            <person name="Chapman J.C."/>
            <person name="Clark S.Y."/>
            <person name="Clarke G."/>
            <person name="Clee C.M."/>
            <person name="Clegg S."/>
            <person name="Corby N."/>
            <person name="Coulson A."/>
            <person name="Dhami P."/>
            <person name="Dutta I."/>
            <person name="Dunn M."/>
            <person name="Faulkner L."/>
            <person name="Frankish A."/>
            <person name="Frankland J.A."/>
            <person name="Garner P."/>
            <person name="Garnett J."/>
            <person name="Gribble S."/>
            <person name="Griffiths C."/>
            <person name="Grocock R."/>
            <person name="Gustafson E."/>
            <person name="Hammond S."/>
            <person name="Harley J.L."/>
            <person name="Hart E."/>
            <person name="Heath P.D."/>
            <person name="Ho T.P."/>
            <person name="Hopkins B."/>
            <person name="Horne J."/>
            <person name="Howden P.J."/>
            <person name="Huckle E."/>
            <person name="Hynds C."/>
            <person name="Johnson C."/>
            <person name="Johnson D."/>
            <person name="Kana A."/>
            <person name="Kay M."/>
            <person name="Kimberley A.M."/>
            <person name="Kershaw J.K."/>
            <person name="Kokkinaki M."/>
            <person name="Laird G.K."/>
            <person name="Lawlor S."/>
            <person name="Lee H.M."/>
            <person name="Leongamornlert D.A."/>
            <person name="Laird G."/>
            <person name="Lloyd C."/>
            <person name="Lloyd D.M."/>
            <person name="Loveland J."/>
            <person name="Lovell J."/>
            <person name="McLaren S."/>
            <person name="McLay K.E."/>
            <person name="McMurray A."/>
            <person name="Mashreghi-Mohammadi M."/>
            <person name="Matthews L."/>
            <person name="Milne S."/>
            <person name="Nickerson T."/>
            <person name="Nguyen M."/>
            <person name="Overton-Larty E."/>
            <person name="Palmer S.A."/>
            <person name="Pearce A.V."/>
            <person name="Peck A.I."/>
            <person name="Pelan S."/>
            <person name="Phillimore B."/>
            <person name="Porter K."/>
            <person name="Rice C.M."/>
            <person name="Rogosin A."/>
            <person name="Ross M.T."/>
            <person name="Sarafidou T."/>
            <person name="Sehra H.K."/>
            <person name="Shownkeen R."/>
            <person name="Skuce C.D."/>
            <person name="Smith M."/>
            <person name="Standring L."/>
            <person name="Sycamore N."/>
            <person name="Tester J."/>
            <person name="Thorpe A."/>
            <person name="Torcasso W."/>
            <person name="Tracey A."/>
            <person name="Tromans A."/>
            <person name="Tsolas J."/>
            <person name="Wall M."/>
            <person name="Walsh J."/>
            <person name="Wang H."/>
            <person name="Weinstock K."/>
            <person name="West A.P."/>
            <person name="Willey D.L."/>
            <person name="Whitehead S.L."/>
            <person name="Wilming L."/>
            <person name="Wray P.W."/>
            <person name="Young L."/>
            <person name="Chen Y."/>
            <person name="Lovering R.C."/>
            <person name="Moschonas N.K."/>
            <person name="Siebert R."/>
            <person name="Fechtel K."/>
            <person name="Bentley D."/>
            <person name="Durbin R.M."/>
            <person name="Hubbard T."/>
            <person name="Doucette-Stamm L."/>
            <person name="Beck S."/>
            <person name="Smith D.R."/>
            <person name="Rogers J."/>
        </authorList>
    </citation>
    <scope>NUCLEOTIDE SEQUENCE [LARGE SCALE GENOMIC DNA]</scope>
</reference>
<reference key="3">
    <citation type="submission" date="2005-09" db="EMBL/GenBank/DDBJ databases">
        <authorList>
            <person name="Mural R.J."/>
            <person name="Istrail S."/>
            <person name="Sutton G.G."/>
            <person name="Florea L."/>
            <person name="Halpern A.L."/>
            <person name="Mobarry C.M."/>
            <person name="Lippert R."/>
            <person name="Walenz B."/>
            <person name="Shatkay H."/>
            <person name="Dew I."/>
            <person name="Miller J.R."/>
            <person name="Flanigan M.J."/>
            <person name="Edwards N.J."/>
            <person name="Bolanos R."/>
            <person name="Fasulo D."/>
            <person name="Halldorsson B.V."/>
            <person name="Hannenhalli S."/>
            <person name="Turner R."/>
            <person name="Yooseph S."/>
            <person name="Lu F."/>
            <person name="Nusskern D.R."/>
            <person name="Shue B.C."/>
            <person name="Zheng X.H."/>
            <person name="Zhong F."/>
            <person name="Delcher A.L."/>
            <person name="Huson D.H."/>
            <person name="Kravitz S.A."/>
            <person name="Mouchard L."/>
            <person name="Reinert K."/>
            <person name="Remington K.A."/>
            <person name="Clark A.G."/>
            <person name="Waterman M.S."/>
            <person name="Eichler E.E."/>
            <person name="Adams M.D."/>
            <person name="Hunkapiller M.W."/>
            <person name="Myers E.W."/>
            <person name="Venter J.C."/>
        </authorList>
    </citation>
    <scope>NUCLEOTIDE SEQUENCE [LARGE SCALE GENOMIC DNA]</scope>
</reference>
<reference key="4">
    <citation type="journal article" date="2004" name="Genome Res.">
        <title>The status, quality, and expansion of the NIH full-length cDNA project: the Mammalian Gene Collection (MGC).</title>
        <authorList>
            <consortium name="The MGC Project Team"/>
        </authorList>
    </citation>
    <scope>NUCLEOTIDE SEQUENCE [LARGE SCALE MRNA]</scope>
    <scope>VARIANTS GLY-73; HIS-79; PRO-148 AND ILE-177</scope>
    <source>
        <tissue>Urinary bladder</tissue>
    </source>
</reference>
<evidence type="ECO:0000269" key="1">
    <source>
    </source>
</evidence>
<dbReference type="EMBL" id="AK313969">
    <property type="protein sequence ID" value="BAG36684.1"/>
    <property type="molecule type" value="mRNA"/>
</dbReference>
<dbReference type="EMBL" id="AL353113">
    <property type="status" value="NOT_ANNOTATED_CDS"/>
    <property type="molecule type" value="Genomic_DNA"/>
</dbReference>
<dbReference type="EMBL" id="AL157394">
    <property type="status" value="NOT_ANNOTATED_CDS"/>
    <property type="molecule type" value="Genomic_DNA"/>
</dbReference>
<dbReference type="EMBL" id="CH471066">
    <property type="protein sequence ID" value="EAW50159.1"/>
    <property type="molecule type" value="Genomic_DNA"/>
</dbReference>
<dbReference type="EMBL" id="BC021671">
    <property type="protein sequence ID" value="AAH21671.1"/>
    <property type="molecule type" value="mRNA"/>
</dbReference>
<dbReference type="CCDS" id="CCDS7390.1"/>
<dbReference type="RefSeq" id="NP_653191.2">
    <property type="nucleotide sequence ID" value="NM_144590.3"/>
</dbReference>
<dbReference type="SMR" id="Q5VYY1"/>
<dbReference type="BioGRID" id="125627">
    <property type="interactions" value="30"/>
</dbReference>
<dbReference type="FunCoup" id="Q5VYY1">
    <property type="interactions" value="82"/>
</dbReference>
<dbReference type="IntAct" id="Q5VYY1">
    <property type="interactions" value="21"/>
</dbReference>
<dbReference type="STRING" id="9606.ENSP00000360998"/>
<dbReference type="iPTMnet" id="Q5VYY1"/>
<dbReference type="PhosphoSitePlus" id="Q5VYY1"/>
<dbReference type="BioMuta" id="ANKRD22"/>
<dbReference type="DMDM" id="74747727"/>
<dbReference type="jPOST" id="Q5VYY1"/>
<dbReference type="MassIVE" id="Q5VYY1"/>
<dbReference type="PaxDb" id="9606-ENSP00000360998"/>
<dbReference type="PeptideAtlas" id="Q5VYY1"/>
<dbReference type="ProteomicsDB" id="65657"/>
<dbReference type="Antibodypedia" id="2542">
    <property type="antibodies" value="100 antibodies from 17 providers"/>
</dbReference>
<dbReference type="DNASU" id="118932"/>
<dbReference type="Ensembl" id="ENST00000371930.5">
    <property type="protein sequence ID" value="ENSP00000360998.4"/>
    <property type="gene ID" value="ENSG00000152766.6"/>
</dbReference>
<dbReference type="GeneID" id="118932"/>
<dbReference type="KEGG" id="hsa:118932"/>
<dbReference type="MANE-Select" id="ENST00000371930.5">
    <property type="protein sequence ID" value="ENSP00000360998.4"/>
    <property type="RefSeq nucleotide sequence ID" value="NM_144590.3"/>
    <property type="RefSeq protein sequence ID" value="NP_653191.2"/>
</dbReference>
<dbReference type="UCSC" id="uc001kfj.5">
    <property type="organism name" value="human"/>
</dbReference>
<dbReference type="AGR" id="HGNC:28321"/>
<dbReference type="CTD" id="118932"/>
<dbReference type="DisGeNET" id="118932"/>
<dbReference type="GeneCards" id="ANKRD22"/>
<dbReference type="HGNC" id="HGNC:28321">
    <property type="gene designation" value="ANKRD22"/>
</dbReference>
<dbReference type="HPA" id="ENSG00000152766">
    <property type="expression patterns" value="Tissue enhanced (esophagus, skin, stomach)"/>
</dbReference>
<dbReference type="neXtProt" id="NX_Q5VYY1"/>
<dbReference type="OpenTargets" id="ENSG00000152766"/>
<dbReference type="PharmGKB" id="PA134954600"/>
<dbReference type="VEuPathDB" id="HostDB:ENSG00000152766"/>
<dbReference type="eggNOG" id="KOG0504">
    <property type="taxonomic scope" value="Eukaryota"/>
</dbReference>
<dbReference type="GeneTree" id="ENSGT00390000009005"/>
<dbReference type="HOGENOM" id="CLU_121978_0_0_1"/>
<dbReference type="InParanoid" id="Q5VYY1"/>
<dbReference type="OMA" id="CINVQDG"/>
<dbReference type="OrthoDB" id="2157354at2759"/>
<dbReference type="PAN-GO" id="Q5VYY1">
    <property type="GO annotations" value="0 GO annotations based on evolutionary models"/>
</dbReference>
<dbReference type="PhylomeDB" id="Q5VYY1"/>
<dbReference type="TreeFam" id="TF332383"/>
<dbReference type="PathwayCommons" id="Q5VYY1"/>
<dbReference type="SignaLink" id="Q5VYY1"/>
<dbReference type="BioGRID-ORCS" id="118932">
    <property type="hits" value="11 hits in 1146 CRISPR screens"/>
</dbReference>
<dbReference type="ChiTaRS" id="ANKRD22">
    <property type="organism name" value="human"/>
</dbReference>
<dbReference type="GenomeRNAi" id="118932"/>
<dbReference type="Pharos" id="Q5VYY1">
    <property type="development level" value="Tbio"/>
</dbReference>
<dbReference type="PRO" id="PR:Q5VYY1"/>
<dbReference type="Proteomes" id="UP000005640">
    <property type="component" value="Chromosome 10"/>
</dbReference>
<dbReference type="RNAct" id="Q5VYY1">
    <property type="molecule type" value="protein"/>
</dbReference>
<dbReference type="Bgee" id="ENSG00000152766">
    <property type="expression patterns" value="Expressed in upper arm skin and 136 other cell types or tissues"/>
</dbReference>
<dbReference type="Gene3D" id="1.25.40.20">
    <property type="entry name" value="Ankyrin repeat-containing domain"/>
    <property type="match status" value="1"/>
</dbReference>
<dbReference type="InterPro" id="IPR002110">
    <property type="entry name" value="Ankyrin_rpt"/>
</dbReference>
<dbReference type="InterPro" id="IPR036770">
    <property type="entry name" value="Ankyrin_rpt-contain_sf"/>
</dbReference>
<dbReference type="InterPro" id="IPR042802">
    <property type="entry name" value="ANR22"/>
</dbReference>
<dbReference type="PANTHER" id="PTHR47276">
    <property type="entry name" value="ANKYRIN REPEAT DOMAIN-CONTAINING PROTEIN 22"/>
    <property type="match status" value="1"/>
</dbReference>
<dbReference type="PANTHER" id="PTHR47276:SF1">
    <property type="entry name" value="ANKYRIN REPEAT DOMAIN-CONTAINING PROTEIN 22"/>
    <property type="match status" value="1"/>
</dbReference>
<dbReference type="Pfam" id="PF12796">
    <property type="entry name" value="Ank_2"/>
    <property type="match status" value="2"/>
</dbReference>
<dbReference type="PRINTS" id="PR01415">
    <property type="entry name" value="ANKYRIN"/>
</dbReference>
<dbReference type="SMART" id="SM00248">
    <property type="entry name" value="ANK"/>
    <property type="match status" value="3"/>
</dbReference>
<dbReference type="SUPFAM" id="SSF48403">
    <property type="entry name" value="Ankyrin repeat"/>
    <property type="match status" value="1"/>
</dbReference>
<dbReference type="PROSITE" id="PS50297">
    <property type="entry name" value="ANK_REP_REGION"/>
    <property type="match status" value="1"/>
</dbReference>
<dbReference type="PROSITE" id="PS50088">
    <property type="entry name" value="ANK_REPEAT"/>
    <property type="match status" value="2"/>
</dbReference>
<accession>Q5VYY1</accession>
<accession>B2R9Y7</accession>
<accession>Q8WU06</accession>
<name>ANR22_HUMAN</name>
<feature type="chain" id="PRO_0000240838" description="Ankyrin repeat domain-containing protein 22">
    <location>
        <begin position="1"/>
        <end position="191"/>
    </location>
</feature>
<feature type="repeat" description="ANK 1">
    <location>
        <begin position="39"/>
        <end position="68"/>
    </location>
</feature>
<feature type="repeat" description="ANK 2">
    <location>
        <begin position="72"/>
        <end position="100"/>
    </location>
</feature>
<feature type="repeat" description="ANK 3">
    <location>
        <begin position="101"/>
        <end position="130"/>
    </location>
</feature>
<feature type="repeat" description="ANK 4">
    <location>
        <begin position="134"/>
        <end position="163"/>
    </location>
</feature>
<feature type="sequence variant" id="VAR_027628" description="In dbSNP:rs17113412." evidence="1">
    <original>E</original>
    <variation>G</variation>
    <location>
        <position position="73"/>
    </location>
</feature>
<feature type="sequence variant" id="VAR_027629" description="In dbSNP:rs17851907." evidence="1">
    <original>Y</original>
    <variation>H</variation>
    <location>
        <position position="79"/>
    </location>
</feature>
<feature type="sequence variant" id="VAR_027630" description="In dbSNP:rs2304804." evidence="1">
    <original>Q</original>
    <variation>P</variation>
    <location>
        <position position="148"/>
    </location>
</feature>
<feature type="sequence variant" id="VAR_027631" description="In dbSNP:rs7912706." evidence="1">
    <original>R</original>
    <variation>I</variation>
    <location>
        <position position="177"/>
    </location>
</feature>
<gene>
    <name type="primary">ANKRD22</name>
</gene>
<organism>
    <name type="scientific">Homo sapiens</name>
    <name type="common">Human</name>
    <dbReference type="NCBI Taxonomy" id="9606"/>
    <lineage>
        <taxon>Eukaryota</taxon>
        <taxon>Metazoa</taxon>
        <taxon>Chordata</taxon>
        <taxon>Craniata</taxon>
        <taxon>Vertebrata</taxon>
        <taxon>Euteleostomi</taxon>
        <taxon>Mammalia</taxon>
        <taxon>Eutheria</taxon>
        <taxon>Euarchontoglires</taxon>
        <taxon>Primates</taxon>
        <taxon>Haplorrhini</taxon>
        <taxon>Catarrhini</taxon>
        <taxon>Hominidae</taxon>
        <taxon>Homo</taxon>
    </lineage>
</organism>
<protein>
    <recommendedName>
        <fullName>Ankyrin repeat domain-containing protein 22</fullName>
    </recommendedName>
</protein>
<sequence length="191" mass="21849">MGILYSEPICQAAYQNDFGQVWRWVKEDSSYANVQDGFNGDTPLICACRRGHVRIVSFLLRRNANVNLKNQKERTCLHYAVKKKFTFIDYLLIILLMPVLLIGYFLMVSKTKQNEALVRMLLDAGVEVNATDCYGCTALHYACEMKNQSLIPLLLEARADPTIKNKHGESSLDIARRLKFSQIELMLRKAL</sequence>
<proteinExistence type="evidence at protein level"/>